<sequence length="292" mass="31310">MFEGSITALVTPFADDRIDEVALHDLVEWQIEEGSFGLVPCGTTGESPTLSKSEHEQVVEITIKTANGRVPVIAGAGSNSTAEAIAFVRHAQNAGADGVLIVSPYYNKPTQEGIYQHFKAIDAASTIPIIVYNIPGRSAIEIHVETLARIFEDCPNVKGVKDATGNLLRPSLERMACGEDFNLLTGEDGTALGYMAHGGHGCISVTANVAPALCADFQQACLNGDFAAALKLQDRLMPLHRALFLETNPAGAKYALQRLGRMRGDLRLPLVTISPSFQEEIDDAMRHAGILL</sequence>
<gene>
    <name evidence="1" type="primary">dapA</name>
    <name type="synonym">mosA</name>
</gene>
<comment type="function">
    <text evidence="6 7">Catalyzes the condensation of (S)-aspartate-beta-semialdehyde [(S)-ASA] and pyruvate to 4-hydroxy-tetrahydrodipicolinate (HTPA).</text>
</comment>
<comment type="catalytic activity">
    <reaction evidence="1">
        <text>L-aspartate 4-semialdehyde + pyruvate = (2S,4S)-4-hydroxy-2,3,4,5-tetrahydrodipicolinate + H2O + H(+)</text>
        <dbReference type="Rhea" id="RHEA:34171"/>
        <dbReference type="ChEBI" id="CHEBI:15361"/>
        <dbReference type="ChEBI" id="CHEBI:15377"/>
        <dbReference type="ChEBI" id="CHEBI:15378"/>
        <dbReference type="ChEBI" id="CHEBI:67139"/>
        <dbReference type="ChEBI" id="CHEBI:537519"/>
        <dbReference type="EC" id="4.3.3.7"/>
    </reaction>
</comment>
<comment type="activity regulation">
    <text evidence="2 3">Is feedback inhibited by lysine. Is competitively inhibited by 2-oxobutyrate with respect to pyruvate.</text>
</comment>
<comment type="biophysicochemical properties">
    <kinetics>
        <KM evidence="2">0.19 mM for pyruvate</KM>
        <KM evidence="2">0.12 mM for L-aspartate-4-semialdehyde</KM>
        <text>kcat is 4.0 sec(-1).</text>
    </kinetics>
    <phDependence>
        <text evidence="2">Optimum pH is 7.7.</text>
    </phDependence>
</comment>
<comment type="pathway">
    <text evidence="1">Amino-acid biosynthesis; L-lysine biosynthesis via DAP pathway; (S)-tetrahydrodipicolinate from L-aspartate: step 3/4.</text>
</comment>
<comment type="subunit">
    <text evidence="3">Homotetramer.</text>
</comment>
<comment type="subcellular location">
    <subcellularLocation>
        <location evidence="1">Cytoplasm</location>
    </subcellularLocation>
</comment>
<comment type="similarity">
    <text evidence="1">Belongs to the DapA family.</text>
</comment>
<comment type="caution">
    <text evidence="7 8">Was originally thought to be involved in the biosynthesis of a rhizopine, catalyzing the conversion of scyllo-inosamine to 3-O-methyl-scyllo-inosamine (PubMed:8349559). However, does not show methyltransferase activity in the presence of scyllo-inosamine and S-adenosylmethionine (SAM), and does not interact with rhizopines and SAM (PubMed:18536061).</text>
</comment>
<comment type="caution">
    <text evidence="5">Was thought to be a dihydrodipicolinate synthase (DHDPS), catalyzing the condensation of (S)-aspartate-beta-semialdehyde [(S)-ASA] and pyruvate to dihydrodipicolinate (DHDP). However, it was shown in E.coli that the product of the enzymatic reaction is not dihydrodipicolinate but in fact (4S)-4-hydroxy-2,3,4,5-tetrahydro-(2S)-dipicolinic acid (HTPA), and that the consecutive dehydration reaction leading to DHDP is not spontaneous but catalyzed by DapB.</text>
</comment>
<comment type="sequence caution" evidence="5">
    <conflict type="frameshift">
        <sequence resource="EMBL-CDS" id="AAA26301"/>
    </conflict>
</comment>
<dbReference type="EC" id="4.3.3.7" evidence="1"/>
<dbReference type="EMBL" id="L17071">
    <property type="protein sequence ID" value="AAA26301.1"/>
    <property type="status" value="ALT_FRAME"/>
    <property type="molecule type" value="Genomic_DNA"/>
</dbReference>
<dbReference type="PIR" id="B53308">
    <property type="entry name" value="B53308"/>
</dbReference>
<dbReference type="RefSeq" id="WP_032490783.1">
    <property type="nucleotide sequence ID" value="NZ_JZXD01000015.1"/>
</dbReference>
<dbReference type="PDB" id="2VC6">
    <property type="method" value="X-ray"/>
    <property type="resolution" value="1.95 A"/>
    <property type="chains" value="A/B=1-292"/>
</dbReference>
<dbReference type="PDBsum" id="2VC6"/>
<dbReference type="SMR" id="Q07607"/>
<dbReference type="PATRIC" id="fig|382.53.peg.1542"/>
<dbReference type="BRENDA" id="4.3.3.7">
    <property type="organism ID" value="5347"/>
</dbReference>
<dbReference type="UniPathway" id="UPA00034">
    <property type="reaction ID" value="UER00017"/>
</dbReference>
<dbReference type="EvolutionaryTrace" id="Q07607"/>
<dbReference type="GO" id="GO:0005829">
    <property type="term" value="C:cytosol"/>
    <property type="evidence" value="ECO:0007669"/>
    <property type="project" value="TreeGrafter"/>
</dbReference>
<dbReference type="GO" id="GO:0008840">
    <property type="term" value="F:4-hydroxy-tetrahydrodipicolinate synthase activity"/>
    <property type="evidence" value="ECO:0007669"/>
    <property type="project" value="UniProtKB-UniRule"/>
</dbReference>
<dbReference type="GO" id="GO:0019877">
    <property type="term" value="P:diaminopimelate biosynthetic process"/>
    <property type="evidence" value="ECO:0007669"/>
    <property type="project" value="UniProtKB-UniRule"/>
</dbReference>
<dbReference type="GO" id="GO:0009089">
    <property type="term" value="P:lysine biosynthetic process via diaminopimelate"/>
    <property type="evidence" value="ECO:0007669"/>
    <property type="project" value="UniProtKB-UniRule"/>
</dbReference>
<dbReference type="CDD" id="cd00950">
    <property type="entry name" value="DHDPS"/>
    <property type="match status" value="1"/>
</dbReference>
<dbReference type="Gene3D" id="3.20.20.70">
    <property type="entry name" value="Aldolase class I"/>
    <property type="match status" value="1"/>
</dbReference>
<dbReference type="HAMAP" id="MF_00418">
    <property type="entry name" value="DapA"/>
    <property type="match status" value="1"/>
</dbReference>
<dbReference type="InterPro" id="IPR013785">
    <property type="entry name" value="Aldolase_TIM"/>
</dbReference>
<dbReference type="InterPro" id="IPR005263">
    <property type="entry name" value="DapA"/>
</dbReference>
<dbReference type="InterPro" id="IPR002220">
    <property type="entry name" value="DapA-like"/>
</dbReference>
<dbReference type="InterPro" id="IPR020625">
    <property type="entry name" value="Schiff_base-form_aldolases_AS"/>
</dbReference>
<dbReference type="InterPro" id="IPR020624">
    <property type="entry name" value="Schiff_base-form_aldolases_CS"/>
</dbReference>
<dbReference type="NCBIfam" id="TIGR00674">
    <property type="entry name" value="dapA"/>
    <property type="match status" value="1"/>
</dbReference>
<dbReference type="PANTHER" id="PTHR12128:SF66">
    <property type="entry name" value="4-HYDROXY-2-OXOGLUTARATE ALDOLASE, MITOCHONDRIAL"/>
    <property type="match status" value="1"/>
</dbReference>
<dbReference type="PANTHER" id="PTHR12128">
    <property type="entry name" value="DIHYDRODIPICOLINATE SYNTHASE"/>
    <property type="match status" value="1"/>
</dbReference>
<dbReference type="Pfam" id="PF00701">
    <property type="entry name" value="DHDPS"/>
    <property type="match status" value="1"/>
</dbReference>
<dbReference type="PIRSF" id="PIRSF001365">
    <property type="entry name" value="DHDPS"/>
    <property type="match status" value="1"/>
</dbReference>
<dbReference type="PRINTS" id="PR00146">
    <property type="entry name" value="DHPICSNTHASE"/>
</dbReference>
<dbReference type="SMART" id="SM01130">
    <property type="entry name" value="DHDPS"/>
    <property type="match status" value="1"/>
</dbReference>
<dbReference type="SUPFAM" id="SSF51569">
    <property type="entry name" value="Aldolase"/>
    <property type="match status" value="1"/>
</dbReference>
<dbReference type="PROSITE" id="PS00665">
    <property type="entry name" value="DHDPS_1"/>
    <property type="match status" value="1"/>
</dbReference>
<dbReference type="PROSITE" id="PS00666">
    <property type="entry name" value="DHDPS_2"/>
    <property type="match status" value="1"/>
</dbReference>
<evidence type="ECO:0000255" key="1">
    <source>
        <dbReference type="HAMAP-Rule" id="MF_00418"/>
    </source>
</evidence>
<evidence type="ECO:0000269" key="2">
    <source>
    </source>
</evidence>
<evidence type="ECO:0000269" key="3">
    <source>
    </source>
</evidence>
<evidence type="ECO:0000303" key="4">
    <source>
    </source>
</evidence>
<evidence type="ECO:0000305" key="5"/>
<evidence type="ECO:0000305" key="6">
    <source>
    </source>
</evidence>
<evidence type="ECO:0000305" key="7">
    <source>
    </source>
</evidence>
<evidence type="ECO:0000305" key="8">
    <source>
    </source>
</evidence>
<evidence type="ECO:0007829" key="9">
    <source>
        <dbReference type="PDB" id="2VC6"/>
    </source>
</evidence>
<protein>
    <recommendedName>
        <fullName evidence="1">4-hydroxy-tetrahydrodipicolinate synthase</fullName>
        <shortName evidence="1">HTPA synthase</shortName>
        <ecNumber evidence="1">4.3.3.7</ecNumber>
    </recommendedName>
    <alternativeName>
        <fullName>Protein MosA</fullName>
    </alternativeName>
</protein>
<feature type="chain" id="PRO_0000103228" description="4-hydroxy-tetrahydrodipicolinate synthase">
    <location>
        <begin position="1"/>
        <end position="292"/>
    </location>
</feature>
<feature type="active site" description="Proton donor/acceptor" evidence="7">
    <location>
        <position position="132"/>
    </location>
</feature>
<feature type="active site" description="Schiff-base intermediate with substrate" evidence="1 3">
    <location>
        <position position="161"/>
    </location>
</feature>
<feature type="binding site" evidence="1">
    <location>
        <position position="44"/>
    </location>
    <ligand>
        <name>pyruvate</name>
        <dbReference type="ChEBI" id="CHEBI:15361"/>
    </ligand>
</feature>
<feature type="binding site" evidence="1">
    <location>
        <position position="203"/>
    </location>
    <ligand>
        <name>pyruvate</name>
        <dbReference type="ChEBI" id="CHEBI:15361"/>
    </ligand>
</feature>
<feature type="site" description="Part of a proton relay during catalysis" evidence="5">
    <location>
        <position position="43"/>
    </location>
</feature>
<feature type="site" description="Part of a proton relay during catalysis" evidence="5">
    <location>
        <position position="106"/>
    </location>
</feature>
<feature type="strand" evidence="9">
    <location>
        <begin position="4"/>
        <end position="8"/>
    </location>
</feature>
<feature type="helix" evidence="9">
    <location>
        <begin position="20"/>
        <end position="32"/>
    </location>
</feature>
<feature type="strand" evidence="9">
    <location>
        <begin position="36"/>
        <end position="39"/>
    </location>
</feature>
<feature type="helix" evidence="9">
    <location>
        <begin position="43"/>
        <end position="45"/>
    </location>
</feature>
<feature type="helix" evidence="9">
    <location>
        <begin position="47"/>
        <end position="49"/>
    </location>
</feature>
<feature type="helix" evidence="9">
    <location>
        <begin position="52"/>
        <end position="66"/>
    </location>
</feature>
<feature type="strand" evidence="9">
    <location>
        <begin position="72"/>
        <end position="75"/>
    </location>
</feature>
<feature type="helix" evidence="9">
    <location>
        <begin position="81"/>
        <end position="93"/>
    </location>
</feature>
<feature type="strand" evidence="9">
    <location>
        <begin position="97"/>
        <end position="102"/>
    </location>
</feature>
<feature type="helix" evidence="9">
    <location>
        <begin position="111"/>
        <end position="124"/>
    </location>
</feature>
<feature type="strand" evidence="9">
    <location>
        <begin position="129"/>
        <end position="133"/>
    </location>
</feature>
<feature type="helix" evidence="9">
    <location>
        <begin position="135"/>
        <end position="138"/>
    </location>
</feature>
<feature type="helix" evidence="9">
    <location>
        <begin position="144"/>
        <end position="153"/>
    </location>
</feature>
<feature type="strand" evidence="9">
    <location>
        <begin position="157"/>
        <end position="162"/>
    </location>
</feature>
<feature type="helix" evidence="9">
    <location>
        <begin position="168"/>
        <end position="176"/>
    </location>
</feature>
<feature type="strand" evidence="9">
    <location>
        <begin position="181"/>
        <end position="186"/>
    </location>
</feature>
<feature type="helix" evidence="9">
    <location>
        <begin position="188"/>
        <end position="190"/>
    </location>
</feature>
<feature type="helix" evidence="9">
    <location>
        <begin position="191"/>
        <end position="196"/>
    </location>
</feature>
<feature type="strand" evidence="9">
    <location>
        <begin position="201"/>
        <end position="205"/>
    </location>
</feature>
<feature type="helix" evidence="9">
    <location>
        <begin position="206"/>
        <end position="208"/>
    </location>
</feature>
<feature type="helix" evidence="9">
    <location>
        <begin position="211"/>
        <end position="222"/>
    </location>
</feature>
<feature type="helix" evidence="9">
    <location>
        <begin position="226"/>
        <end position="242"/>
    </location>
</feature>
<feature type="strand" evidence="9">
    <location>
        <begin position="245"/>
        <end position="247"/>
    </location>
</feature>
<feature type="helix" evidence="9">
    <location>
        <begin position="250"/>
        <end position="258"/>
    </location>
</feature>
<feature type="helix" evidence="9">
    <location>
        <begin position="275"/>
        <end position="287"/>
    </location>
</feature>
<keyword id="KW-0002">3D-structure</keyword>
<keyword id="KW-0021">Allosteric enzyme</keyword>
<keyword id="KW-0028">Amino-acid biosynthesis</keyword>
<keyword id="KW-0963">Cytoplasm</keyword>
<keyword id="KW-0220">Diaminopimelate biosynthesis</keyword>
<keyword id="KW-0456">Lyase</keyword>
<keyword id="KW-0457">Lysine biosynthesis</keyword>
<keyword id="KW-0614">Plasmid</keyword>
<keyword id="KW-0704">Schiff base</keyword>
<reference key="1">
    <citation type="journal article" date="1993" name="J. Bacteriol.">
        <title>The Rhizobium meliloti rhizopine mos locus is a mosaic structure facilitating its symbiotic regulation.</title>
        <authorList>
            <person name="Murphy P.J."/>
            <person name="Trenz S.P."/>
            <person name="Grzemski W."/>
            <person name="de Bruijn F.J."/>
            <person name="Schell J."/>
        </authorList>
    </citation>
    <scope>NUCLEOTIDE SEQUENCE [GENOMIC DNA]</scope>
    <source>
        <strain>L5-30</strain>
        <plasmid>pSym</plasmid>
    </source>
</reference>
<reference key="2">
    <citation type="journal article" date="2004" name="J. Mol. Biol.">
        <title>MosA, a protein implicated in rhizopine biosynthesis in Sinorhizobium meliloti L5-30, is a dihydrodipicolinate synthase.</title>
        <authorList>
            <person name="Tam P.H."/>
            <person name="Phenix C.P."/>
            <person name="Palmer D.R."/>
        </authorList>
    </citation>
    <scope>NUCLEOTIDE SEQUENCE [GENOMIC DNA]</scope>
    <scope>FUNCTION</scope>
    <scope>BIOPHYSICOCHEMICAL PROPERTIES</scope>
    <scope>ACTIVITY REGULATION</scope>
    <scope>IDENTIFICATION BY MASS SPECTROMETRY</scope>
    <scope>COMPLEMENTATION OF E.COLI DAPA MUTANT</scope>
    <source>
        <strain>L5-30</strain>
        <plasmid>pSym</plasmid>
    </source>
</reference>
<reference key="3">
    <citation type="journal article" date="2008" name="ChemBioChem">
        <title>Structural, functional and calorimetric investigation of MosA, a dihydrodipicolinate synthase from Sinorhizobium meliloti l5-30, does not support involvement in rhizopine biosynthesis.</title>
        <authorList>
            <person name="Phenix C.P."/>
            <person name="Nienaber K."/>
            <person name="Tam P.H."/>
            <person name="Delbaere L.T."/>
            <person name="Palmer D.R."/>
        </authorList>
    </citation>
    <scope>X-RAY CRYSTALLOGRAPHY (1.95 ANGSTROMS) OF 1-289 IN COMPLEX WITH PYRUVATE</scope>
    <scope>FUNCTION</scope>
    <scope>ACTIVE SITES</scope>
    <scope>ACTIVITY REGULATION</scope>
    <scope>SUBUNIT</scope>
    <source>
        <strain>L5-30</strain>
    </source>
</reference>
<proteinExistence type="evidence at protein level"/>
<geneLocation type="plasmid" evidence="4">
    <name>pSym</name>
</geneLocation>
<organism>
    <name type="scientific">Rhizobium meliloti</name>
    <name type="common">Ensifer meliloti</name>
    <name type="synonym">Sinorhizobium meliloti</name>
    <dbReference type="NCBI Taxonomy" id="382"/>
    <lineage>
        <taxon>Bacteria</taxon>
        <taxon>Pseudomonadati</taxon>
        <taxon>Pseudomonadota</taxon>
        <taxon>Alphaproteobacteria</taxon>
        <taxon>Hyphomicrobiales</taxon>
        <taxon>Rhizobiaceae</taxon>
        <taxon>Sinorhizobium/Ensifer group</taxon>
        <taxon>Sinorhizobium</taxon>
    </lineage>
</organism>
<name>DAPA_RHIML</name>
<accession>Q07607</accession>